<proteinExistence type="inferred from homology"/>
<protein>
    <recommendedName>
        <fullName evidence="1">Uronate isomerase</fullName>
        <ecNumber evidence="1">5.3.1.12</ecNumber>
    </recommendedName>
    <alternativeName>
        <fullName evidence="1">Glucuronate isomerase</fullName>
    </alternativeName>
    <alternativeName>
        <fullName evidence="1">Uronic isomerase</fullName>
    </alternativeName>
</protein>
<sequence>MKKFMDKDFLLENEVAKVLYHNYASKVPVFDYHCHLVPMEIATDHKFKNLTEMWLYHDHYKWRAMRSFGIDEEYITGNASDYDKFYQFAKMMPYLIGNPIYHWSHLELKRFFGVEETLSEKTASTIWEKCNKVIENNNLTAKKLIEMANVVYIGTTDDPIDDLRYHKQLKEDINFKCSVNPSFRPEKAMKIQNEGFKEYIGKLAEVSNVEIKSFDDLKKALEIRLDYFYENGCMITDHSLERVVFYKFSCEEINEIFIKALNGENINNEEASKYSVALLISLGKMYAERNMVMQLHIGALRNNNTRMFNRIGADAGFDSIDDGEIAYSLSRILDELDKEDKLPKTILYCLNPKDNEVLGTMIGNFQGGNIAGKIQFGSGWWFNDQKDGMERQMMALSQLGLISQFVGMVTDSRSFLSYTRHEYFRRILCNYLGNLVESGQYPYEEEILGEIVQNICYKNSAKYFKR</sequence>
<gene>
    <name evidence="1" type="primary">uxaC</name>
    <name type="ordered locus">CPE0152</name>
</gene>
<reference key="1">
    <citation type="journal article" date="2002" name="Proc. Natl. Acad. Sci. U.S.A.">
        <title>Complete genome sequence of Clostridium perfringens, an anaerobic flesh-eater.</title>
        <authorList>
            <person name="Shimizu T."/>
            <person name="Ohtani K."/>
            <person name="Hirakawa H."/>
            <person name="Ohshima K."/>
            <person name="Yamashita A."/>
            <person name="Shiba T."/>
            <person name="Ogasawara N."/>
            <person name="Hattori M."/>
            <person name="Kuhara S."/>
            <person name="Hayashi H."/>
        </authorList>
    </citation>
    <scope>NUCLEOTIDE SEQUENCE [LARGE SCALE GENOMIC DNA]</scope>
    <source>
        <strain>13 / Type A</strain>
    </source>
</reference>
<organism>
    <name type="scientific">Clostridium perfringens (strain 13 / Type A)</name>
    <dbReference type="NCBI Taxonomy" id="195102"/>
    <lineage>
        <taxon>Bacteria</taxon>
        <taxon>Bacillati</taxon>
        <taxon>Bacillota</taxon>
        <taxon>Clostridia</taxon>
        <taxon>Eubacteriales</taxon>
        <taxon>Clostridiaceae</taxon>
        <taxon>Clostridium</taxon>
    </lineage>
</organism>
<feature type="chain" id="PRO_0000172768" description="Uronate isomerase">
    <location>
        <begin position="1"/>
        <end position="466"/>
    </location>
</feature>
<dbReference type="EC" id="5.3.1.12" evidence="1"/>
<dbReference type="EMBL" id="BA000016">
    <property type="protein sequence ID" value="BAB79858.1"/>
    <property type="molecule type" value="Genomic_DNA"/>
</dbReference>
<dbReference type="RefSeq" id="WP_011009640.1">
    <property type="nucleotide sequence ID" value="NC_003366.1"/>
</dbReference>
<dbReference type="SMR" id="Q8XP14"/>
<dbReference type="STRING" id="195102.gene:10489396"/>
<dbReference type="KEGG" id="cpe:CPE0152"/>
<dbReference type="HOGENOM" id="CLU_044465_1_0_9"/>
<dbReference type="UniPathway" id="UPA00246"/>
<dbReference type="Proteomes" id="UP000000818">
    <property type="component" value="Chromosome"/>
</dbReference>
<dbReference type="GO" id="GO:0008880">
    <property type="term" value="F:glucuronate isomerase activity"/>
    <property type="evidence" value="ECO:0007669"/>
    <property type="project" value="UniProtKB-UniRule"/>
</dbReference>
<dbReference type="GO" id="GO:0019698">
    <property type="term" value="P:D-galacturonate catabolic process"/>
    <property type="evidence" value="ECO:0007669"/>
    <property type="project" value="TreeGrafter"/>
</dbReference>
<dbReference type="GO" id="GO:0042840">
    <property type="term" value="P:D-glucuronate catabolic process"/>
    <property type="evidence" value="ECO:0007669"/>
    <property type="project" value="TreeGrafter"/>
</dbReference>
<dbReference type="Gene3D" id="3.20.20.140">
    <property type="entry name" value="Metal-dependent hydrolases"/>
    <property type="match status" value="1"/>
</dbReference>
<dbReference type="Gene3D" id="1.10.2020.10">
    <property type="entry name" value="uronate isomerase, domain 2, chain A"/>
    <property type="match status" value="1"/>
</dbReference>
<dbReference type="HAMAP" id="MF_00675">
    <property type="entry name" value="UxaC"/>
    <property type="match status" value="1"/>
</dbReference>
<dbReference type="InterPro" id="IPR032466">
    <property type="entry name" value="Metal_Hydrolase"/>
</dbReference>
<dbReference type="InterPro" id="IPR003766">
    <property type="entry name" value="Uronate_isomerase"/>
</dbReference>
<dbReference type="NCBIfam" id="NF002794">
    <property type="entry name" value="PRK02925.1"/>
    <property type="match status" value="1"/>
</dbReference>
<dbReference type="PANTHER" id="PTHR30068">
    <property type="entry name" value="URONATE ISOMERASE"/>
    <property type="match status" value="1"/>
</dbReference>
<dbReference type="PANTHER" id="PTHR30068:SF4">
    <property type="entry name" value="URONATE ISOMERASE"/>
    <property type="match status" value="1"/>
</dbReference>
<dbReference type="Pfam" id="PF02614">
    <property type="entry name" value="UxaC"/>
    <property type="match status" value="1"/>
</dbReference>
<dbReference type="SUPFAM" id="SSF51556">
    <property type="entry name" value="Metallo-dependent hydrolases"/>
    <property type="match status" value="1"/>
</dbReference>
<keyword id="KW-0413">Isomerase</keyword>
<keyword id="KW-1185">Reference proteome</keyword>
<comment type="catalytic activity">
    <reaction evidence="1">
        <text>D-glucuronate = D-fructuronate</text>
        <dbReference type="Rhea" id="RHEA:13049"/>
        <dbReference type="ChEBI" id="CHEBI:58720"/>
        <dbReference type="ChEBI" id="CHEBI:59863"/>
        <dbReference type="EC" id="5.3.1.12"/>
    </reaction>
</comment>
<comment type="catalytic activity">
    <reaction evidence="1">
        <text>aldehydo-D-galacturonate = keto-D-tagaturonate</text>
        <dbReference type="Rhea" id="RHEA:27702"/>
        <dbReference type="ChEBI" id="CHEBI:12952"/>
        <dbReference type="ChEBI" id="CHEBI:17886"/>
        <dbReference type="EC" id="5.3.1.12"/>
    </reaction>
</comment>
<comment type="pathway">
    <text evidence="1">Carbohydrate metabolism; pentose and glucuronate interconversion.</text>
</comment>
<comment type="similarity">
    <text evidence="1">Belongs to the metallo-dependent hydrolases superfamily. Uronate isomerase family.</text>
</comment>
<name>UXAC_CLOPE</name>
<evidence type="ECO:0000255" key="1">
    <source>
        <dbReference type="HAMAP-Rule" id="MF_00675"/>
    </source>
</evidence>
<accession>Q8XP14</accession>